<keyword id="KW-0012">Acyltransferase</keyword>
<keyword id="KW-0963">Cytoplasm</keyword>
<keyword id="KW-0484">Methanogenesis</keyword>
<keyword id="KW-0554">One-carbon metabolism</keyword>
<keyword id="KW-1185">Reference proteome</keyword>
<keyword id="KW-0808">Transferase</keyword>
<reference key="1">
    <citation type="journal article" date="2002" name="Genome Res.">
        <title>The genome of Methanosarcina acetivorans reveals extensive metabolic and physiological diversity.</title>
        <authorList>
            <person name="Galagan J.E."/>
            <person name="Nusbaum C."/>
            <person name="Roy A."/>
            <person name="Endrizzi M.G."/>
            <person name="Macdonald P."/>
            <person name="FitzHugh W."/>
            <person name="Calvo S."/>
            <person name="Engels R."/>
            <person name="Smirnov S."/>
            <person name="Atnoor D."/>
            <person name="Brown A."/>
            <person name="Allen N."/>
            <person name="Naylor J."/>
            <person name="Stange-Thomann N."/>
            <person name="DeArellano K."/>
            <person name="Johnson R."/>
            <person name="Linton L."/>
            <person name="McEwan P."/>
            <person name="McKernan K."/>
            <person name="Talamas J."/>
            <person name="Tirrell A."/>
            <person name="Ye W."/>
            <person name="Zimmer A."/>
            <person name="Barber R.D."/>
            <person name="Cann I."/>
            <person name="Graham D.E."/>
            <person name="Grahame D.A."/>
            <person name="Guss A.M."/>
            <person name="Hedderich R."/>
            <person name="Ingram-Smith C."/>
            <person name="Kuettner H.C."/>
            <person name="Krzycki J.A."/>
            <person name="Leigh J.A."/>
            <person name="Li W."/>
            <person name="Liu J."/>
            <person name="Mukhopadhyay B."/>
            <person name="Reeve J.N."/>
            <person name="Smith K."/>
            <person name="Springer T.A."/>
            <person name="Umayam L.A."/>
            <person name="White O."/>
            <person name="White R.H."/>
            <person name="de Macario E.C."/>
            <person name="Ferry J.G."/>
            <person name="Jarrell K.F."/>
            <person name="Jing H."/>
            <person name="Macario A.J.L."/>
            <person name="Paulsen I.T."/>
            <person name="Pritchett M."/>
            <person name="Sowers K.R."/>
            <person name="Swanson R.V."/>
            <person name="Zinder S.H."/>
            <person name="Lander E."/>
            <person name="Metcalf W.W."/>
            <person name="Birren B."/>
        </authorList>
    </citation>
    <scope>NUCLEOTIDE SEQUENCE [LARGE SCALE GENOMIC DNA]</scope>
    <source>
        <strain>ATCC 35395 / DSM 2834 / JCM 12185 / C2A</strain>
    </source>
</reference>
<feature type="chain" id="PRO_0000138116" description="Formylmethanofuran--tetrahydromethanopterin formyltransferase">
    <location>
        <begin position="1"/>
        <end position="297"/>
    </location>
</feature>
<name>FTR_METAC</name>
<dbReference type="EC" id="2.3.1.101" evidence="1"/>
<dbReference type="EMBL" id="AE010299">
    <property type="protein sequence ID" value="AAM03464.1"/>
    <property type="molecule type" value="Genomic_DNA"/>
</dbReference>
<dbReference type="RefSeq" id="WP_011020069.1">
    <property type="nucleotide sequence ID" value="NC_003552.1"/>
</dbReference>
<dbReference type="SMR" id="Q8TUQ5"/>
<dbReference type="FunCoup" id="Q8TUQ5">
    <property type="interactions" value="73"/>
</dbReference>
<dbReference type="STRING" id="188937.MA_0010"/>
<dbReference type="EnsemblBacteria" id="AAM03464">
    <property type="protein sequence ID" value="AAM03464"/>
    <property type="gene ID" value="MA_0010"/>
</dbReference>
<dbReference type="GeneID" id="1471902"/>
<dbReference type="KEGG" id="mac:MA_0010"/>
<dbReference type="HOGENOM" id="CLU_081314_0_0_2"/>
<dbReference type="InParanoid" id="Q8TUQ5"/>
<dbReference type="OrthoDB" id="81373at2157"/>
<dbReference type="PhylomeDB" id="Q8TUQ5"/>
<dbReference type="UniPathway" id="UPA00640">
    <property type="reaction ID" value="UER00693"/>
</dbReference>
<dbReference type="Proteomes" id="UP000002487">
    <property type="component" value="Chromosome"/>
</dbReference>
<dbReference type="GO" id="GO:0005737">
    <property type="term" value="C:cytoplasm"/>
    <property type="evidence" value="ECO:0007669"/>
    <property type="project" value="UniProtKB-SubCell"/>
</dbReference>
<dbReference type="GO" id="GO:0030270">
    <property type="term" value="F:formylmethanofuran-tetrahydromethanopterin N-formyltransferase activity"/>
    <property type="evidence" value="ECO:0007669"/>
    <property type="project" value="UniProtKB-UniRule"/>
</dbReference>
<dbReference type="GO" id="GO:0019386">
    <property type="term" value="P:methanogenesis, from carbon dioxide"/>
    <property type="evidence" value="ECO:0007669"/>
    <property type="project" value="UniProtKB-UniRule"/>
</dbReference>
<dbReference type="GO" id="GO:0006730">
    <property type="term" value="P:one-carbon metabolic process"/>
    <property type="evidence" value="ECO:0007669"/>
    <property type="project" value="UniProtKB-UniRule"/>
</dbReference>
<dbReference type="Gene3D" id="3.30.70.520">
    <property type="match status" value="2"/>
</dbReference>
<dbReference type="HAMAP" id="MF_00579">
    <property type="entry name" value="FTR"/>
    <property type="match status" value="1"/>
</dbReference>
<dbReference type="InterPro" id="IPR014053">
    <property type="entry name" value="ForMFR_H4MPT_ForTrfase"/>
</dbReference>
<dbReference type="InterPro" id="IPR002770">
    <property type="entry name" value="ForMFR_H4MPT_ForTrfase_C"/>
</dbReference>
<dbReference type="InterPro" id="IPR023447">
    <property type="entry name" value="ForMFR_H4MPT_ForTrfase_fd-like"/>
</dbReference>
<dbReference type="InterPro" id="IPR022667">
    <property type="entry name" value="ForMFR_H4MPT_ForTrfase_N"/>
</dbReference>
<dbReference type="NCBIfam" id="TIGR03119">
    <property type="entry name" value="one_C_fhcD"/>
    <property type="match status" value="1"/>
</dbReference>
<dbReference type="NCBIfam" id="NF002554">
    <property type="entry name" value="PRK02114.1"/>
    <property type="match status" value="1"/>
</dbReference>
<dbReference type="Pfam" id="PF01913">
    <property type="entry name" value="FTR"/>
    <property type="match status" value="1"/>
</dbReference>
<dbReference type="Pfam" id="PF02741">
    <property type="entry name" value="FTR_C"/>
    <property type="match status" value="1"/>
</dbReference>
<dbReference type="PIRSF" id="PIRSF006414">
    <property type="entry name" value="Ftr_formyl_trnsf"/>
    <property type="match status" value="1"/>
</dbReference>
<dbReference type="SUPFAM" id="SSF55112">
    <property type="entry name" value="Formylmethanofuran:tetrahydromethanopterin formyltransferase"/>
    <property type="match status" value="2"/>
</dbReference>
<protein>
    <recommendedName>
        <fullName evidence="1">Formylmethanofuran--tetrahydromethanopterin formyltransferase</fullName>
        <shortName evidence="1">Ftr</shortName>
        <ecNumber evidence="1">2.3.1.101</ecNumber>
    </recommendedName>
    <alternativeName>
        <fullName evidence="1">H4MPT formyltransferase</fullName>
    </alternativeName>
</protein>
<sequence length="297" mass="31575">MEINGVEIEDTYAEAFPIKIARVLITAATKRWAQVAATEATGFATSVIMCPAEAGIEKFASPSETPDGRPGVYVQICTFKYEALEEQLLERIGQCVLTAPTTAVFNGLPDAEKQFNIGFKLKFFGDGMESEAQVAGRKVYKVPIMEGDFVTEENIGAIAGIAGGNFFIFGDSQMSALTAAEAAVDAIEELEGTIAPFPGGIVASGSKSGANKYKFLKATANEKFCPSIKDKVENTEVPADVNAIYEIVINGLDEASIKAAMKAGIEAAVTVPGIKKISAGNYGGKLGKYQFKLHELF</sequence>
<proteinExistence type="inferred from homology"/>
<accession>Q8TUQ5</accession>
<comment type="function">
    <text evidence="1">Catalyzes the reversible transfer of a formyl group from formylmethanofuran (formyl-MFR) to tetrahydromethanopterin (H(4)MPT) to produce 5-formyl tetrahydromethanopterin (5-formyl-H(4)MPT) and methanofuran (MFR).</text>
</comment>
<comment type="catalytic activity">
    <reaction evidence="1">
        <text>N-formylmethanofuran + 5,6,7,8-tetrahydromethanopterin + H(+) = N(5)-formyl-5,6,7,8-tetrahydromethanopterin + methanofuran</text>
        <dbReference type="Rhea" id="RHEA:18061"/>
        <dbReference type="ChEBI" id="CHEBI:15378"/>
        <dbReference type="ChEBI" id="CHEBI:57727"/>
        <dbReference type="ChEBI" id="CHEBI:58018"/>
        <dbReference type="ChEBI" id="CHEBI:58103"/>
        <dbReference type="ChEBI" id="CHEBI:58151"/>
        <dbReference type="EC" id="2.3.1.101"/>
    </reaction>
</comment>
<comment type="pathway">
    <text evidence="1">One-carbon metabolism; methanogenesis from CO(2); 5,10-methenyl-5,6,7,8-tetrahydromethanopterin from CO(2): step 2/3.</text>
</comment>
<comment type="subunit">
    <text evidence="1">Homotetramer.</text>
</comment>
<comment type="subcellular location">
    <subcellularLocation>
        <location evidence="1">Cytoplasm</location>
    </subcellularLocation>
</comment>
<comment type="similarity">
    <text evidence="1">Belongs to the FTR family.</text>
</comment>
<organism>
    <name type="scientific">Methanosarcina acetivorans (strain ATCC 35395 / DSM 2834 / JCM 12185 / C2A)</name>
    <dbReference type="NCBI Taxonomy" id="188937"/>
    <lineage>
        <taxon>Archaea</taxon>
        <taxon>Methanobacteriati</taxon>
        <taxon>Methanobacteriota</taxon>
        <taxon>Stenosarchaea group</taxon>
        <taxon>Methanomicrobia</taxon>
        <taxon>Methanosarcinales</taxon>
        <taxon>Methanosarcinaceae</taxon>
        <taxon>Methanosarcina</taxon>
    </lineage>
</organism>
<gene>
    <name evidence="1" type="primary">ftr</name>
    <name type="ordered locus">MA_0010</name>
</gene>
<evidence type="ECO:0000255" key="1">
    <source>
        <dbReference type="HAMAP-Rule" id="MF_00579"/>
    </source>
</evidence>